<evidence type="ECO:0000255" key="1">
    <source>
        <dbReference type="HAMAP-Rule" id="MF_01347"/>
    </source>
</evidence>
<proteinExistence type="inferred from homology"/>
<comment type="function">
    <text evidence="1">Produces ATP from ADP in the presence of a proton gradient across the membrane. The catalytic sites are hosted primarily by the beta subunits.</text>
</comment>
<comment type="catalytic activity">
    <reaction evidence="1">
        <text>ATP + H2O + 4 H(+)(in) = ADP + phosphate + 5 H(+)(out)</text>
        <dbReference type="Rhea" id="RHEA:57720"/>
        <dbReference type="ChEBI" id="CHEBI:15377"/>
        <dbReference type="ChEBI" id="CHEBI:15378"/>
        <dbReference type="ChEBI" id="CHEBI:30616"/>
        <dbReference type="ChEBI" id="CHEBI:43474"/>
        <dbReference type="ChEBI" id="CHEBI:456216"/>
        <dbReference type="EC" id="7.1.2.2"/>
    </reaction>
</comment>
<comment type="subunit">
    <text evidence="1">F-type ATPases have 2 components, CF(1) - the catalytic core - and CF(0) - the membrane proton channel. CF(1) has five subunits: alpha(3), beta(3), gamma(1), delta(1), epsilon(1). CF(0) has three main subunits: a(1), b(2) and c(9-12). The alpha and beta chains form an alternating ring which encloses part of the gamma chain. CF(1) is attached to CF(0) by a central stalk formed by the gamma and epsilon chains, while a peripheral stalk is formed by the delta and b chains.</text>
</comment>
<comment type="subcellular location">
    <subcellularLocation>
        <location evidence="1">Cell inner membrane</location>
        <topology evidence="1">Peripheral membrane protein</topology>
    </subcellularLocation>
</comment>
<comment type="similarity">
    <text evidence="1">Belongs to the ATPase alpha/beta chains family.</text>
</comment>
<gene>
    <name evidence="1" type="primary">atpD</name>
    <name type="ordered locus">GbCGDNIH1_2056</name>
</gene>
<reference key="1">
    <citation type="journal article" date="2007" name="J. Bacteriol.">
        <title>Genome sequence analysis of the emerging human pathogenic acetic acid bacterium Granulibacter bethesdensis.</title>
        <authorList>
            <person name="Greenberg D.E."/>
            <person name="Porcella S.F."/>
            <person name="Zelazny A.M."/>
            <person name="Virtaneva K."/>
            <person name="Sturdevant D.E."/>
            <person name="Kupko J.J. III"/>
            <person name="Barbian K.D."/>
            <person name="Babar A."/>
            <person name="Dorward D.W."/>
            <person name="Holland S.M."/>
        </authorList>
    </citation>
    <scope>NUCLEOTIDE SEQUENCE [LARGE SCALE GENOMIC DNA]</scope>
    <source>
        <strain>ATCC BAA-1260 / CGDNIH1</strain>
    </source>
</reference>
<feature type="chain" id="PRO_0000339532" description="ATP synthase subunit beta">
    <location>
        <begin position="1"/>
        <end position="476"/>
    </location>
</feature>
<feature type="binding site" evidence="1">
    <location>
        <begin position="152"/>
        <end position="159"/>
    </location>
    <ligand>
        <name>ATP</name>
        <dbReference type="ChEBI" id="CHEBI:30616"/>
    </ligand>
</feature>
<sequence length="476" mass="51194">MASNNVGRVTQILGAVVDVQFDGELPFIQNALQTRIGDRTLILEVAQELGERTVRAIAMDSTDGLVRGAEVEDLGRPITVPVGPGTLGRILNVIGEPIDERGPVDAKKTYSIHREAPSFEEQAASAEILVTGIKVVDLLAPYLKGGKIGLFGGAGVGKTVLIQELINNIAKAHGGVSVFAGVGERTREGNDLYHEMIDAGVIKLGENTTEGSKVALVYGQMNEPPGARARVALSGLSIAEYFRDEEGQDVLFFVDNIFRFTQAGAEVSALLGRIPSAVGYQPTLATDMGALQERITSTKKGSITSVQAIYVPADDLTDPAPATSFAHLDATTVLNRAISEKGIYPAVDPLDSTSRSLDPRIVGEEHYKVARDVQRILQTYKSLQDIIAILGMDELSEEDKLTVARARKIERFMSQPFHVAEVFTGSPGVFVSIEDTVRSFKEIVEGKHDDLPEAAFLMVGTIEDARKKAEALKAKA</sequence>
<accession>Q0BQE8</accession>
<protein>
    <recommendedName>
        <fullName evidence="1">ATP synthase subunit beta</fullName>
        <ecNumber evidence="1">7.1.2.2</ecNumber>
    </recommendedName>
    <alternativeName>
        <fullName evidence="1">ATP synthase F1 sector subunit beta</fullName>
    </alternativeName>
    <alternativeName>
        <fullName evidence="1">F-ATPase subunit beta</fullName>
    </alternativeName>
</protein>
<name>ATPB_GRABC</name>
<organism>
    <name type="scientific">Granulibacter bethesdensis (strain ATCC BAA-1260 / CGDNIH1)</name>
    <dbReference type="NCBI Taxonomy" id="391165"/>
    <lineage>
        <taxon>Bacteria</taxon>
        <taxon>Pseudomonadati</taxon>
        <taxon>Pseudomonadota</taxon>
        <taxon>Alphaproteobacteria</taxon>
        <taxon>Acetobacterales</taxon>
        <taxon>Acetobacteraceae</taxon>
        <taxon>Granulibacter</taxon>
    </lineage>
</organism>
<keyword id="KW-0066">ATP synthesis</keyword>
<keyword id="KW-0067">ATP-binding</keyword>
<keyword id="KW-0997">Cell inner membrane</keyword>
<keyword id="KW-1003">Cell membrane</keyword>
<keyword id="KW-0139">CF(1)</keyword>
<keyword id="KW-0375">Hydrogen ion transport</keyword>
<keyword id="KW-0406">Ion transport</keyword>
<keyword id="KW-0472">Membrane</keyword>
<keyword id="KW-0547">Nucleotide-binding</keyword>
<keyword id="KW-1185">Reference proteome</keyword>
<keyword id="KW-1278">Translocase</keyword>
<keyword id="KW-0813">Transport</keyword>
<dbReference type="EC" id="7.1.2.2" evidence="1"/>
<dbReference type="EMBL" id="CP000394">
    <property type="protein sequence ID" value="ABI62954.1"/>
    <property type="molecule type" value="Genomic_DNA"/>
</dbReference>
<dbReference type="RefSeq" id="WP_011632756.1">
    <property type="nucleotide sequence ID" value="NC_008343.2"/>
</dbReference>
<dbReference type="SMR" id="Q0BQE8"/>
<dbReference type="STRING" id="391165.GbCGDNIH1_2056"/>
<dbReference type="GeneID" id="69746624"/>
<dbReference type="KEGG" id="gbe:GbCGDNIH1_2056"/>
<dbReference type="eggNOG" id="COG0055">
    <property type="taxonomic scope" value="Bacteria"/>
</dbReference>
<dbReference type="HOGENOM" id="CLU_022398_0_2_5"/>
<dbReference type="OrthoDB" id="9801639at2"/>
<dbReference type="Proteomes" id="UP000001963">
    <property type="component" value="Chromosome"/>
</dbReference>
<dbReference type="GO" id="GO:0005886">
    <property type="term" value="C:plasma membrane"/>
    <property type="evidence" value="ECO:0007669"/>
    <property type="project" value="UniProtKB-SubCell"/>
</dbReference>
<dbReference type="GO" id="GO:0045259">
    <property type="term" value="C:proton-transporting ATP synthase complex"/>
    <property type="evidence" value="ECO:0007669"/>
    <property type="project" value="UniProtKB-KW"/>
</dbReference>
<dbReference type="GO" id="GO:0005524">
    <property type="term" value="F:ATP binding"/>
    <property type="evidence" value="ECO:0007669"/>
    <property type="project" value="UniProtKB-UniRule"/>
</dbReference>
<dbReference type="GO" id="GO:0016887">
    <property type="term" value="F:ATP hydrolysis activity"/>
    <property type="evidence" value="ECO:0007669"/>
    <property type="project" value="InterPro"/>
</dbReference>
<dbReference type="GO" id="GO:0046933">
    <property type="term" value="F:proton-transporting ATP synthase activity, rotational mechanism"/>
    <property type="evidence" value="ECO:0007669"/>
    <property type="project" value="UniProtKB-UniRule"/>
</dbReference>
<dbReference type="CDD" id="cd18110">
    <property type="entry name" value="ATP-synt_F1_beta_C"/>
    <property type="match status" value="1"/>
</dbReference>
<dbReference type="CDD" id="cd18115">
    <property type="entry name" value="ATP-synt_F1_beta_N"/>
    <property type="match status" value="1"/>
</dbReference>
<dbReference type="CDD" id="cd01133">
    <property type="entry name" value="F1-ATPase_beta_CD"/>
    <property type="match status" value="1"/>
</dbReference>
<dbReference type="FunFam" id="1.10.1140.10:FF:000001">
    <property type="entry name" value="ATP synthase subunit beta"/>
    <property type="match status" value="1"/>
</dbReference>
<dbReference type="FunFam" id="3.40.50.300:FF:000026">
    <property type="entry name" value="ATP synthase subunit beta"/>
    <property type="match status" value="1"/>
</dbReference>
<dbReference type="Gene3D" id="2.40.10.170">
    <property type="match status" value="1"/>
</dbReference>
<dbReference type="Gene3D" id="1.10.1140.10">
    <property type="entry name" value="Bovine Mitochondrial F1-atpase, Atp Synthase Beta Chain, Chain D, domain 3"/>
    <property type="match status" value="1"/>
</dbReference>
<dbReference type="Gene3D" id="3.40.50.300">
    <property type="entry name" value="P-loop containing nucleotide triphosphate hydrolases"/>
    <property type="match status" value="1"/>
</dbReference>
<dbReference type="HAMAP" id="MF_01347">
    <property type="entry name" value="ATP_synth_beta_bact"/>
    <property type="match status" value="1"/>
</dbReference>
<dbReference type="InterPro" id="IPR003593">
    <property type="entry name" value="AAA+_ATPase"/>
</dbReference>
<dbReference type="InterPro" id="IPR055190">
    <property type="entry name" value="ATP-synt_VA_C"/>
</dbReference>
<dbReference type="InterPro" id="IPR005722">
    <property type="entry name" value="ATP_synth_F1_bsu"/>
</dbReference>
<dbReference type="InterPro" id="IPR020003">
    <property type="entry name" value="ATPase_a/bsu_AS"/>
</dbReference>
<dbReference type="InterPro" id="IPR050053">
    <property type="entry name" value="ATPase_alpha/beta_chains"/>
</dbReference>
<dbReference type="InterPro" id="IPR004100">
    <property type="entry name" value="ATPase_F1/V1/A1_a/bsu_N"/>
</dbReference>
<dbReference type="InterPro" id="IPR036121">
    <property type="entry name" value="ATPase_F1/V1/A1_a/bsu_N_sf"/>
</dbReference>
<dbReference type="InterPro" id="IPR000194">
    <property type="entry name" value="ATPase_F1/V1/A1_a/bsu_nucl-bd"/>
</dbReference>
<dbReference type="InterPro" id="IPR024034">
    <property type="entry name" value="ATPase_F1/V1_b/a_C"/>
</dbReference>
<dbReference type="InterPro" id="IPR027417">
    <property type="entry name" value="P-loop_NTPase"/>
</dbReference>
<dbReference type="NCBIfam" id="TIGR01039">
    <property type="entry name" value="atpD"/>
    <property type="match status" value="1"/>
</dbReference>
<dbReference type="PANTHER" id="PTHR15184">
    <property type="entry name" value="ATP SYNTHASE"/>
    <property type="match status" value="1"/>
</dbReference>
<dbReference type="PANTHER" id="PTHR15184:SF71">
    <property type="entry name" value="ATP SYNTHASE SUBUNIT BETA, MITOCHONDRIAL"/>
    <property type="match status" value="1"/>
</dbReference>
<dbReference type="Pfam" id="PF00006">
    <property type="entry name" value="ATP-synt_ab"/>
    <property type="match status" value="1"/>
</dbReference>
<dbReference type="Pfam" id="PF02874">
    <property type="entry name" value="ATP-synt_ab_N"/>
    <property type="match status" value="1"/>
</dbReference>
<dbReference type="Pfam" id="PF22919">
    <property type="entry name" value="ATP-synt_VA_C"/>
    <property type="match status" value="1"/>
</dbReference>
<dbReference type="PIRSF" id="PIRSF039072">
    <property type="entry name" value="ATPase_subunit_beta"/>
    <property type="match status" value="1"/>
</dbReference>
<dbReference type="SMART" id="SM00382">
    <property type="entry name" value="AAA"/>
    <property type="match status" value="1"/>
</dbReference>
<dbReference type="SUPFAM" id="SSF47917">
    <property type="entry name" value="C-terminal domain of alpha and beta subunits of F1 ATP synthase"/>
    <property type="match status" value="1"/>
</dbReference>
<dbReference type="SUPFAM" id="SSF50615">
    <property type="entry name" value="N-terminal domain of alpha and beta subunits of F1 ATP synthase"/>
    <property type="match status" value="1"/>
</dbReference>
<dbReference type="SUPFAM" id="SSF52540">
    <property type="entry name" value="P-loop containing nucleoside triphosphate hydrolases"/>
    <property type="match status" value="1"/>
</dbReference>
<dbReference type="PROSITE" id="PS00152">
    <property type="entry name" value="ATPASE_ALPHA_BETA"/>
    <property type="match status" value="1"/>
</dbReference>